<dbReference type="EC" id="2.4.1.250" evidence="1"/>
<dbReference type="EMBL" id="CP002047">
    <property type="protein sequence ID" value="ADI08129.1"/>
    <property type="molecule type" value="Genomic_DNA"/>
</dbReference>
<dbReference type="RefSeq" id="WP_014177596.1">
    <property type="nucleotide sequence ID" value="NC_016582.1"/>
</dbReference>
<dbReference type="SMR" id="D7C367"/>
<dbReference type="STRING" id="749414.SBI_05009"/>
<dbReference type="CAZy" id="GT4">
    <property type="family name" value="Glycosyltransferase Family 4"/>
</dbReference>
<dbReference type="KEGG" id="sbh:SBI_05009"/>
<dbReference type="PATRIC" id="fig|749414.3.peg.5180"/>
<dbReference type="eggNOG" id="COG0438">
    <property type="taxonomic scope" value="Bacteria"/>
</dbReference>
<dbReference type="HOGENOM" id="CLU_009583_2_3_11"/>
<dbReference type="Proteomes" id="UP000000377">
    <property type="component" value="Chromosome"/>
</dbReference>
<dbReference type="GO" id="GO:0008375">
    <property type="term" value="F:acetylglucosaminyltransferase activity"/>
    <property type="evidence" value="ECO:0007669"/>
    <property type="project" value="UniProtKB-UniRule"/>
</dbReference>
<dbReference type="GO" id="GO:0102710">
    <property type="term" value="F:D-inositol-3-phosphate glycosyltransferase activity"/>
    <property type="evidence" value="ECO:0007669"/>
    <property type="project" value="UniProtKB-EC"/>
</dbReference>
<dbReference type="GO" id="GO:0000287">
    <property type="term" value="F:magnesium ion binding"/>
    <property type="evidence" value="ECO:0007669"/>
    <property type="project" value="UniProtKB-UniRule"/>
</dbReference>
<dbReference type="GO" id="GO:0010125">
    <property type="term" value="P:mycothiol biosynthetic process"/>
    <property type="evidence" value="ECO:0007669"/>
    <property type="project" value="UniProtKB-UniRule"/>
</dbReference>
<dbReference type="CDD" id="cd03800">
    <property type="entry name" value="GT4_sucrose_synthase"/>
    <property type="match status" value="1"/>
</dbReference>
<dbReference type="Gene3D" id="3.40.50.2000">
    <property type="entry name" value="Glycogen Phosphorylase B"/>
    <property type="match status" value="2"/>
</dbReference>
<dbReference type="HAMAP" id="MF_01695">
    <property type="entry name" value="MshA"/>
    <property type="match status" value="1"/>
</dbReference>
<dbReference type="InterPro" id="IPR001296">
    <property type="entry name" value="Glyco_trans_1"/>
</dbReference>
<dbReference type="InterPro" id="IPR028098">
    <property type="entry name" value="Glyco_trans_4-like_N"/>
</dbReference>
<dbReference type="InterPro" id="IPR017814">
    <property type="entry name" value="Mycothiol_biosynthesis_MshA"/>
</dbReference>
<dbReference type="NCBIfam" id="TIGR03449">
    <property type="entry name" value="mycothiol_MshA"/>
    <property type="match status" value="1"/>
</dbReference>
<dbReference type="PANTHER" id="PTHR12526:SF510">
    <property type="entry name" value="D-INOSITOL 3-PHOSPHATE GLYCOSYLTRANSFERASE"/>
    <property type="match status" value="1"/>
</dbReference>
<dbReference type="PANTHER" id="PTHR12526">
    <property type="entry name" value="GLYCOSYLTRANSFERASE"/>
    <property type="match status" value="1"/>
</dbReference>
<dbReference type="Pfam" id="PF13579">
    <property type="entry name" value="Glyco_trans_4_4"/>
    <property type="match status" value="1"/>
</dbReference>
<dbReference type="Pfam" id="PF00534">
    <property type="entry name" value="Glycos_transf_1"/>
    <property type="match status" value="1"/>
</dbReference>
<dbReference type="SUPFAM" id="SSF53756">
    <property type="entry name" value="UDP-Glycosyltransferase/glycogen phosphorylase"/>
    <property type="match status" value="1"/>
</dbReference>
<accession>D7C367</accession>
<organism>
    <name type="scientific">Streptomyces bingchenggensis (strain BCW-1)</name>
    <dbReference type="NCBI Taxonomy" id="749414"/>
    <lineage>
        <taxon>Bacteria</taxon>
        <taxon>Bacillati</taxon>
        <taxon>Actinomycetota</taxon>
        <taxon>Actinomycetes</taxon>
        <taxon>Kitasatosporales</taxon>
        <taxon>Streptomycetaceae</taxon>
        <taxon>Streptomyces</taxon>
    </lineage>
</organism>
<proteinExistence type="inferred from homology"/>
<reference key="1">
    <citation type="journal article" date="2010" name="J. Bacteriol.">
        <title>Genome sequence of the milbemycin-producing bacterium Streptomyces bingchenggensis.</title>
        <authorList>
            <person name="Wang X.J."/>
            <person name="Yan Y.J."/>
            <person name="Zhang B."/>
            <person name="An J."/>
            <person name="Wang J.J."/>
            <person name="Tian J."/>
            <person name="Jiang L."/>
            <person name="Chen Y.H."/>
            <person name="Huang S.X."/>
            <person name="Yin M."/>
            <person name="Zhang J."/>
            <person name="Gao A.L."/>
            <person name="Liu C.X."/>
            <person name="Zhu Z.X."/>
            <person name="Xiang W.S."/>
        </authorList>
    </citation>
    <scope>NUCLEOTIDE SEQUENCE [LARGE SCALE GENOMIC DNA]</scope>
    <source>
        <strain>BCW-1</strain>
    </source>
</reference>
<reference key="2">
    <citation type="journal article" date="2010" name="Science">
        <title>A catalog of reference genomes from the human microbiome.</title>
        <authorList>
            <person name="Nelson K.E."/>
            <person name="Weinstock G.M."/>
            <person name="Highlander S.K."/>
            <person name="Worley K.C."/>
            <person name="Creasy H.H."/>
            <person name="Wortman J.R."/>
            <person name="Rusch D.B."/>
            <person name="Mitreva M."/>
            <person name="Sodergren E."/>
            <person name="Chinwalla A.T."/>
            <person name="Feldgarden M."/>
            <person name="Gevers D."/>
            <person name="Haas B.J."/>
            <person name="Madupu R."/>
            <person name="Ward D.V."/>
            <person name="Birren B.W."/>
            <person name="Gibbs R.A."/>
            <person name="Methe B."/>
            <person name="Petrosino J.F."/>
            <person name="Strausberg R.L."/>
            <person name="Sutton G.G."/>
            <person name="White O.R."/>
            <person name="Wilson R.K."/>
            <person name="Durkin S."/>
            <person name="Giglio M.G."/>
            <person name="Gujja S."/>
            <person name="Howarth C."/>
            <person name="Kodira C.D."/>
            <person name="Kyrpides N."/>
            <person name="Mehta T."/>
            <person name="Muzny D.M."/>
            <person name="Pearson M."/>
            <person name="Pepin K."/>
            <person name="Pati A."/>
            <person name="Qin X."/>
            <person name="Yandava C."/>
            <person name="Zeng Q."/>
            <person name="Zhang L."/>
            <person name="Berlin A.M."/>
            <person name="Chen L."/>
            <person name="Hepburn T.A."/>
            <person name="Johnson J."/>
            <person name="McCorrison J."/>
            <person name="Miller J."/>
            <person name="Minx P."/>
            <person name="Nusbaum C."/>
            <person name="Russ C."/>
            <person name="Sykes S.M."/>
            <person name="Tomlinson C.M."/>
            <person name="Young S."/>
            <person name="Warren W.C."/>
            <person name="Badger J."/>
            <person name="Crabtree J."/>
            <person name="Markowitz V.M."/>
            <person name="Orvis J."/>
            <person name="Cree A."/>
            <person name="Ferriera S."/>
            <person name="Fulton L.L."/>
            <person name="Fulton R.S."/>
            <person name="Gillis M."/>
            <person name="Hemphill L.D."/>
            <person name="Joshi V."/>
            <person name="Kovar C."/>
            <person name="Torralba M."/>
            <person name="Wetterstrand K.A."/>
            <person name="Abouellleil A."/>
            <person name="Wollam A.M."/>
            <person name="Buhay C.J."/>
            <person name="Ding Y."/>
            <person name="Dugan S."/>
            <person name="FitzGerald M.G."/>
            <person name="Holder M."/>
            <person name="Hostetler J."/>
            <person name="Clifton S.W."/>
            <person name="Allen-Vercoe E."/>
            <person name="Earl A.M."/>
            <person name="Farmer C.N."/>
            <person name="Liolios K."/>
            <person name="Surette M.G."/>
            <person name="Xu Q."/>
            <person name="Pohl C."/>
            <person name="Wilczek-Boney K."/>
            <person name="Zhu D."/>
        </authorList>
    </citation>
    <scope>NUCLEOTIDE SEQUENCE [LARGE SCALE GENOMIC DNA]</scope>
</reference>
<evidence type="ECO:0000255" key="1">
    <source>
        <dbReference type="HAMAP-Rule" id="MF_01695"/>
    </source>
</evidence>
<evidence type="ECO:0000256" key="2">
    <source>
        <dbReference type="SAM" id="MobiDB-lite"/>
    </source>
</evidence>
<comment type="function">
    <text evidence="1">Catalyzes the transfer of a N-acetyl-glucosamine moiety to 1D-myo-inositol 3-phosphate to produce 1D-myo-inositol 2-acetamido-2-deoxy-glucopyranoside 3-phosphate in the mycothiol biosynthesis pathway.</text>
</comment>
<comment type="catalytic activity">
    <reaction evidence="1">
        <text>1D-myo-inositol 3-phosphate + UDP-N-acetyl-alpha-D-glucosamine = 1D-myo-inositol 2-acetamido-2-deoxy-alpha-D-glucopyranoside 3-phosphate + UDP + H(+)</text>
        <dbReference type="Rhea" id="RHEA:26188"/>
        <dbReference type="ChEBI" id="CHEBI:15378"/>
        <dbReference type="ChEBI" id="CHEBI:57705"/>
        <dbReference type="ChEBI" id="CHEBI:58223"/>
        <dbReference type="ChEBI" id="CHEBI:58401"/>
        <dbReference type="ChEBI" id="CHEBI:58892"/>
        <dbReference type="EC" id="2.4.1.250"/>
    </reaction>
</comment>
<comment type="subunit">
    <text evidence="1">Homodimer.</text>
</comment>
<comment type="similarity">
    <text evidence="1">Belongs to the glycosyltransferase group 1 family. MshA subfamily.</text>
</comment>
<protein>
    <recommendedName>
        <fullName>D-inositol 3-phosphate glycosyltransferase</fullName>
        <ecNumber evidence="1">2.4.1.250</ecNumber>
    </recommendedName>
    <alternativeName>
        <fullName evidence="1">N-acetylglucosamine-inositol-phosphate N-acetylglucosaminyltransferase</fullName>
        <shortName evidence="1">GlcNAc-Ins-P N-acetylglucosaminyltransferase</shortName>
    </alternativeName>
</protein>
<gene>
    <name evidence="1" type="primary">mshA</name>
    <name type="ordered locus">SBI_05009</name>
</gene>
<feature type="chain" id="PRO_0000400161" description="D-inositol 3-phosphate glycosyltransferase">
    <location>
        <begin position="1"/>
        <end position="455"/>
    </location>
</feature>
<feature type="region of interest" description="Disordered" evidence="2">
    <location>
        <begin position="1"/>
        <end position="25"/>
    </location>
</feature>
<feature type="binding site" evidence="1">
    <location>
        <position position="45"/>
    </location>
    <ligand>
        <name>1D-myo-inositol 3-phosphate</name>
        <dbReference type="ChEBI" id="CHEBI:58401"/>
    </ligand>
</feature>
<feature type="binding site" evidence="1">
    <location>
        <begin position="51"/>
        <end position="52"/>
    </location>
    <ligand>
        <name>UDP-N-acetyl-alpha-D-glucosamine</name>
        <dbReference type="ChEBI" id="CHEBI:57705"/>
    </ligand>
</feature>
<feature type="binding site" evidence="1">
    <location>
        <begin position="56"/>
        <end position="61"/>
    </location>
    <ligand>
        <name>1D-myo-inositol 3-phosphate</name>
        <dbReference type="ChEBI" id="CHEBI:58401"/>
    </ligand>
</feature>
<feature type="binding site" evidence="1">
    <location>
        <position position="59"/>
    </location>
    <ligand>
        <name>UDP-N-acetyl-alpha-D-glucosamine</name>
        <dbReference type="ChEBI" id="CHEBI:57705"/>
    </ligand>
</feature>
<feature type="binding site" evidence="1">
    <location>
        <position position="114"/>
    </location>
    <ligand>
        <name>1D-myo-inositol 3-phosphate</name>
        <dbReference type="ChEBI" id="CHEBI:58401"/>
    </ligand>
</feature>
<feature type="binding site" evidence="1">
    <location>
        <position position="147"/>
    </location>
    <ligand>
        <name>1D-myo-inositol 3-phosphate</name>
        <dbReference type="ChEBI" id="CHEBI:58401"/>
    </ligand>
</feature>
<feature type="binding site" evidence="1">
    <location>
        <position position="171"/>
    </location>
    <ligand>
        <name>1D-myo-inositol 3-phosphate</name>
        <dbReference type="ChEBI" id="CHEBI:58401"/>
    </ligand>
</feature>
<feature type="binding site" evidence="1">
    <location>
        <position position="191"/>
    </location>
    <ligand>
        <name>1D-myo-inositol 3-phosphate</name>
        <dbReference type="ChEBI" id="CHEBI:58401"/>
    </ligand>
</feature>
<feature type="binding site" evidence="1">
    <location>
        <position position="266"/>
    </location>
    <ligand>
        <name>UDP-N-acetyl-alpha-D-glucosamine</name>
        <dbReference type="ChEBI" id="CHEBI:57705"/>
    </ligand>
</feature>
<feature type="binding site" evidence="1">
    <location>
        <position position="271"/>
    </location>
    <ligand>
        <name>UDP-N-acetyl-alpha-D-glucosamine</name>
        <dbReference type="ChEBI" id="CHEBI:57705"/>
    </ligand>
</feature>
<feature type="binding site" evidence="1">
    <location>
        <position position="341"/>
    </location>
    <ligand>
        <name>Mg(2+)</name>
        <dbReference type="ChEBI" id="CHEBI:18420"/>
    </ligand>
</feature>
<feature type="binding site" evidence="1">
    <location>
        <position position="342"/>
    </location>
    <ligand>
        <name>Mg(2+)</name>
        <dbReference type="ChEBI" id="CHEBI:18420"/>
    </ligand>
</feature>
<feature type="binding site" evidence="1">
    <location>
        <position position="344"/>
    </location>
    <ligand>
        <name>Mg(2+)</name>
        <dbReference type="ChEBI" id="CHEBI:18420"/>
    </ligand>
</feature>
<feature type="binding site" evidence="1">
    <location>
        <position position="354"/>
    </location>
    <ligand>
        <name>UDP-N-acetyl-alpha-D-glucosamine</name>
        <dbReference type="ChEBI" id="CHEBI:57705"/>
    </ligand>
</feature>
<feature type="binding site" evidence="1">
    <location>
        <position position="362"/>
    </location>
    <ligand>
        <name>UDP-N-acetyl-alpha-D-glucosamine</name>
        <dbReference type="ChEBI" id="CHEBI:57705"/>
    </ligand>
</feature>
<feature type="binding site" evidence="1">
    <location>
        <position position="368"/>
    </location>
    <ligand>
        <name>Mg(2+)</name>
        <dbReference type="ChEBI" id="CHEBI:18420"/>
    </ligand>
</feature>
<name>MSHA_STRBB</name>
<sequence length="455" mass="48982">MSQHVSRLGGLRGRSHGHGAFGGPYHQRLRRVGRRPRRIAMLSVHTSPLHQPGTGDAGGMNVYIVELAKRLAAIDIEVEIFTRATTGTLPPTVELAPGVLVRHVDAGPYEGLAKEDLPAQLCAFTHGVMGAWAGHRPGYYDLVHSHYWLSGHVGWLAAERWRVPLVHAMHTMAKVKNAALAEGDTPEPAARVIGEEQIVGAADRLIANTEEEADELVRHYGADPELVAVVHPGVNLERFRPADGRAAARARLGLPPDALIPLFAGRIQPLKAPDILLHAVAHLLDEDPRLRERIVVPVVGGPSGSGLAKPERLHKLAARLGVSDVIRFRPPCTQDELADWYRAASVLVMPSYNESFGLVAIEAQACGTPVIAAEVGGLPVAVRDGHSGILVPGHNPADYARELHRLSADPGLLKRLGSGAAHHAERFGWDKAAAATADVYAEAMRGYRRLRSVHG</sequence>
<keyword id="KW-0328">Glycosyltransferase</keyword>
<keyword id="KW-0460">Magnesium</keyword>
<keyword id="KW-0479">Metal-binding</keyword>
<keyword id="KW-1185">Reference proteome</keyword>
<keyword id="KW-0808">Transferase</keyword>